<feature type="chain" id="PRO_1000077370" description="Threonine--tRNA ligase">
    <location>
        <begin position="1"/>
        <end position="640"/>
    </location>
</feature>
<feature type="domain" description="TGS" evidence="2">
    <location>
        <begin position="1"/>
        <end position="61"/>
    </location>
</feature>
<feature type="region of interest" description="Catalytic" evidence="1">
    <location>
        <begin position="242"/>
        <end position="533"/>
    </location>
</feature>
<feature type="binding site" evidence="1">
    <location>
        <position position="333"/>
    </location>
    <ligand>
        <name>Zn(2+)</name>
        <dbReference type="ChEBI" id="CHEBI:29105"/>
    </ligand>
</feature>
<feature type="binding site" evidence="1">
    <location>
        <position position="384"/>
    </location>
    <ligand>
        <name>Zn(2+)</name>
        <dbReference type="ChEBI" id="CHEBI:29105"/>
    </ligand>
</feature>
<feature type="binding site" evidence="1">
    <location>
        <position position="510"/>
    </location>
    <ligand>
        <name>Zn(2+)</name>
        <dbReference type="ChEBI" id="CHEBI:29105"/>
    </ligand>
</feature>
<reference key="1">
    <citation type="submission" date="2008-01" db="EMBL/GenBank/DDBJ databases">
        <title>Complete sequence of Pseudomonas putida GB-1.</title>
        <authorList>
            <consortium name="US DOE Joint Genome Institute"/>
            <person name="Copeland A."/>
            <person name="Lucas S."/>
            <person name="Lapidus A."/>
            <person name="Barry K."/>
            <person name="Glavina del Rio T."/>
            <person name="Dalin E."/>
            <person name="Tice H."/>
            <person name="Pitluck S."/>
            <person name="Bruce D."/>
            <person name="Goodwin L."/>
            <person name="Chertkov O."/>
            <person name="Brettin T."/>
            <person name="Detter J.C."/>
            <person name="Han C."/>
            <person name="Kuske C.R."/>
            <person name="Schmutz J."/>
            <person name="Larimer F."/>
            <person name="Land M."/>
            <person name="Hauser L."/>
            <person name="Kyrpides N."/>
            <person name="Kim E."/>
            <person name="McCarthy J.K."/>
            <person name="Richardson P."/>
        </authorList>
    </citation>
    <scope>NUCLEOTIDE SEQUENCE [LARGE SCALE GENOMIC DNA]</scope>
    <source>
        <strain>GB-1</strain>
    </source>
</reference>
<evidence type="ECO:0000255" key="1">
    <source>
        <dbReference type="HAMAP-Rule" id="MF_00184"/>
    </source>
</evidence>
<evidence type="ECO:0000255" key="2">
    <source>
        <dbReference type="PROSITE-ProRule" id="PRU01228"/>
    </source>
</evidence>
<accession>B0KKR8</accession>
<sequence length="640" mass="72670">MPVITLPDGSQRSFDHAVSVADVAASIGAGLAKATVAGKVDGKLVDACDLISNDATLQIITPKDEEGLEIIRHSCAHLVGHAVKQLYPTAKMVIGPVIDEGFYYDIAYERPFTPEDMAAIEKRMMELIEKDYDVVKKMTPRAEVIDVFKARGEDYKLRLVEDMPDEQAMGLYYHEEYVDMCRGPHVPNTRFLKAFKLTKLSGAYWRGDAKNEQLQRVYGTAWADKKQLAAYIQRIEEAEKRDHRKIGKQLDLFHLQEEAPGMVFWHANGWTVYQVLEQYMRGVQRENGYQEIKTPQVVDRILWERSGHWSNYAENMFTTSSESRDYAVKPMNCPCHVQVFNQGLKSYRDLPLRLAEFGACHRNEPSGALHGIMRVRGFVQDDAHIFCTEEQVKKEAADFIKLTLDVYKDFGFSDIAMKLSTRPAKRVGSEELWDRAETALADALNESGLEWEYQPGEGAFYGPKIEFTLRDCLGRNWQCGTLQYDPNLPERLDASYIAEDNSRVRPVMLHRAILGSFERFIGMLIEHYAGVFPAWLAPTQAVIMNITDKQADFALEVEKSLNGSGFRAKSDLRNEKIGFKIREHTLLKVPYLLVIGDREVETQTVAVRTREGADLGSMPVAQFAELLTQAVSRRGRQESE</sequence>
<keyword id="KW-0030">Aminoacyl-tRNA synthetase</keyword>
<keyword id="KW-0067">ATP-binding</keyword>
<keyword id="KW-0963">Cytoplasm</keyword>
<keyword id="KW-0436">Ligase</keyword>
<keyword id="KW-0479">Metal-binding</keyword>
<keyword id="KW-0547">Nucleotide-binding</keyword>
<keyword id="KW-0648">Protein biosynthesis</keyword>
<keyword id="KW-0694">RNA-binding</keyword>
<keyword id="KW-0820">tRNA-binding</keyword>
<keyword id="KW-0862">Zinc</keyword>
<name>SYT_PSEPG</name>
<gene>
    <name evidence="1" type="primary">thrS</name>
    <name type="ordered locus">PputGB1_3481</name>
</gene>
<dbReference type="EC" id="6.1.1.3" evidence="1"/>
<dbReference type="EMBL" id="CP000926">
    <property type="protein sequence ID" value="ABY99372.1"/>
    <property type="molecule type" value="Genomic_DNA"/>
</dbReference>
<dbReference type="RefSeq" id="WP_012273093.1">
    <property type="nucleotide sequence ID" value="NC_010322.1"/>
</dbReference>
<dbReference type="SMR" id="B0KKR8"/>
<dbReference type="KEGG" id="ppg:PputGB1_3481"/>
<dbReference type="eggNOG" id="COG0441">
    <property type="taxonomic scope" value="Bacteria"/>
</dbReference>
<dbReference type="HOGENOM" id="CLU_008554_0_1_6"/>
<dbReference type="Proteomes" id="UP000002157">
    <property type="component" value="Chromosome"/>
</dbReference>
<dbReference type="GO" id="GO:0005829">
    <property type="term" value="C:cytosol"/>
    <property type="evidence" value="ECO:0007669"/>
    <property type="project" value="TreeGrafter"/>
</dbReference>
<dbReference type="GO" id="GO:0005524">
    <property type="term" value="F:ATP binding"/>
    <property type="evidence" value="ECO:0007669"/>
    <property type="project" value="UniProtKB-UniRule"/>
</dbReference>
<dbReference type="GO" id="GO:0046872">
    <property type="term" value="F:metal ion binding"/>
    <property type="evidence" value="ECO:0007669"/>
    <property type="project" value="UniProtKB-KW"/>
</dbReference>
<dbReference type="GO" id="GO:0004829">
    <property type="term" value="F:threonine-tRNA ligase activity"/>
    <property type="evidence" value="ECO:0007669"/>
    <property type="project" value="UniProtKB-UniRule"/>
</dbReference>
<dbReference type="GO" id="GO:0000049">
    <property type="term" value="F:tRNA binding"/>
    <property type="evidence" value="ECO:0007669"/>
    <property type="project" value="UniProtKB-KW"/>
</dbReference>
<dbReference type="GO" id="GO:0006435">
    <property type="term" value="P:threonyl-tRNA aminoacylation"/>
    <property type="evidence" value="ECO:0007669"/>
    <property type="project" value="UniProtKB-UniRule"/>
</dbReference>
<dbReference type="CDD" id="cd01667">
    <property type="entry name" value="TGS_ThrRS"/>
    <property type="match status" value="1"/>
</dbReference>
<dbReference type="CDD" id="cd00860">
    <property type="entry name" value="ThrRS_anticodon"/>
    <property type="match status" value="1"/>
</dbReference>
<dbReference type="CDD" id="cd00771">
    <property type="entry name" value="ThrRS_core"/>
    <property type="match status" value="1"/>
</dbReference>
<dbReference type="FunFam" id="3.10.20.30:FF:000005">
    <property type="entry name" value="Threonine--tRNA ligase"/>
    <property type="match status" value="1"/>
</dbReference>
<dbReference type="FunFam" id="3.30.54.20:FF:000002">
    <property type="entry name" value="Threonine--tRNA ligase"/>
    <property type="match status" value="1"/>
</dbReference>
<dbReference type="FunFam" id="3.30.930.10:FF:000002">
    <property type="entry name" value="Threonine--tRNA ligase"/>
    <property type="match status" value="1"/>
</dbReference>
<dbReference type="FunFam" id="3.40.50.800:FF:000001">
    <property type="entry name" value="Threonine--tRNA ligase"/>
    <property type="match status" value="1"/>
</dbReference>
<dbReference type="FunFam" id="3.30.980.10:FF:000005">
    <property type="entry name" value="Threonyl-tRNA synthetase, mitochondrial"/>
    <property type="match status" value="1"/>
</dbReference>
<dbReference type="Gene3D" id="3.10.20.30">
    <property type="match status" value="1"/>
</dbReference>
<dbReference type="Gene3D" id="3.30.54.20">
    <property type="match status" value="1"/>
</dbReference>
<dbReference type="Gene3D" id="3.40.50.800">
    <property type="entry name" value="Anticodon-binding domain"/>
    <property type="match status" value="1"/>
</dbReference>
<dbReference type="Gene3D" id="3.30.930.10">
    <property type="entry name" value="Bira Bifunctional Protein, Domain 2"/>
    <property type="match status" value="1"/>
</dbReference>
<dbReference type="Gene3D" id="3.30.980.10">
    <property type="entry name" value="Threonyl-trna Synthetase, Chain A, domain 2"/>
    <property type="match status" value="1"/>
</dbReference>
<dbReference type="HAMAP" id="MF_00184">
    <property type="entry name" value="Thr_tRNA_synth"/>
    <property type="match status" value="1"/>
</dbReference>
<dbReference type="InterPro" id="IPR002314">
    <property type="entry name" value="aa-tRNA-synt_IIb"/>
</dbReference>
<dbReference type="InterPro" id="IPR006195">
    <property type="entry name" value="aa-tRNA-synth_II"/>
</dbReference>
<dbReference type="InterPro" id="IPR045864">
    <property type="entry name" value="aa-tRNA-synth_II/BPL/LPL"/>
</dbReference>
<dbReference type="InterPro" id="IPR004154">
    <property type="entry name" value="Anticodon-bd"/>
</dbReference>
<dbReference type="InterPro" id="IPR036621">
    <property type="entry name" value="Anticodon-bd_dom_sf"/>
</dbReference>
<dbReference type="InterPro" id="IPR012675">
    <property type="entry name" value="Beta-grasp_dom_sf"/>
</dbReference>
<dbReference type="InterPro" id="IPR004095">
    <property type="entry name" value="TGS"/>
</dbReference>
<dbReference type="InterPro" id="IPR012676">
    <property type="entry name" value="TGS-like"/>
</dbReference>
<dbReference type="InterPro" id="IPR002320">
    <property type="entry name" value="Thr-tRNA-ligase_IIa"/>
</dbReference>
<dbReference type="InterPro" id="IPR018163">
    <property type="entry name" value="Thr/Ala-tRNA-synth_IIc_edit"/>
</dbReference>
<dbReference type="InterPro" id="IPR047246">
    <property type="entry name" value="ThrRS_anticodon"/>
</dbReference>
<dbReference type="InterPro" id="IPR033728">
    <property type="entry name" value="ThrRS_core"/>
</dbReference>
<dbReference type="InterPro" id="IPR012947">
    <property type="entry name" value="tRNA_SAD"/>
</dbReference>
<dbReference type="NCBIfam" id="TIGR00418">
    <property type="entry name" value="thrS"/>
    <property type="match status" value="1"/>
</dbReference>
<dbReference type="PANTHER" id="PTHR11451:SF44">
    <property type="entry name" value="THREONINE--TRNA LIGASE, CHLOROPLASTIC_MITOCHONDRIAL 2"/>
    <property type="match status" value="1"/>
</dbReference>
<dbReference type="PANTHER" id="PTHR11451">
    <property type="entry name" value="THREONINE-TRNA LIGASE"/>
    <property type="match status" value="1"/>
</dbReference>
<dbReference type="Pfam" id="PF03129">
    <property type="entry name" value="HGTP_anticodon"/>
    <property type="match status" value="1"/>
</dbReference>
<dbReference type="Pfam" id="PF02824">
    <property type="entry name" value="TGS"/>
    <property type="match status" value="1"/>
</dbReference>
<dbReference type="Pfam" id="PF00587">
    <property type="entry name" value="tRNA-synt_2b"/>
    <property type="match status" value="1"/>
</dbReference>
<dbReference type="Pfam" id="PF07973">
    <property type="entry name" value="tRNA_SAD"/>
    <property type="match status" value="1"/>
</dbReference>
<dbReference type="PRINTS" id="PR01047">
    <property type="entry name" value="TRNASYNTHTHR"/>
</dbReference>
<dbReference type="SMART" id="SM00863">
    <property type="entry name" value="tRNA_SAD"/>
    <property type="match status" value="1"/>
</dbReference>
<dbReference type="SUPFAM" id="SSF52954">
    <property type="entry name" value="Class II aaRS ABD-related"/>
    <property type="match status" value="1"/>
</dbReference>
<dbReference type="SUPFAM" id="SSF55681">
    <property type="entry name" value="Class II aaRS and biotin synthetases"/>
    <property type="match status" value="1"/>
</dbReference>
<dbReference type="SUPFAM" id="SSF81271">
    <property type="entry name" value="TGS-like"/>
    <property type="match status" value="1"/>
</dbReference>
<dbReference type="SUPFAM" id="SSF55186">
    <property type="entry name" value="ThrRS/AlaRS common domain"/>
    <property type="match status" value="1"/>
</dbReference>
<dbReference type="PROSITE" id="PS50862">
    <property type="entry name" value="AA_TRNA_LIGASE_II"/>
    <property type="match status" value="1"/>
</dbReference>
<dbReference type="PROSITE" id="PS51880">
    <property type="entry name" value="TGS"/>
    <property type="match status" value="1"/>
</dbReference>
<proteinExistence type="inferred from homology"/>
<comment type="function">
    <text evidence="1">Catalyzes the attachment of threonine to tRNA(Thr) in a two-step reaction: L-threonine is first activated by ATP to form Thr-AMP and then transferred to the acceptor end of tRNA(Thr). Also edits incorrectly charged L-seryl-tRNA(Thr).</text>
</comment>
<comment type="catalytic activity">
    <reaction evidence="1">
        <text>tRNA(Thr) + L-threonine + ATP = L-threonyl-tRNA(Thr) + AMP + diphosphate + H(+)</text>
        <dbReference type="Rhea" id="RHEA:24624"/>
        <dbReference type="Rhea" id="RHEA-COMP:9670"/>
        <dbReference type="Rhea" id="RHEA-COMP:9704"/>
        <dbReference type="ChEBI" id="CHEBI:15378"/>
        <dbReference type="ChEBI" id="CHEBI:30616"/>
        <dbReference type="ChEBI" id="CHEBI:33019"/>
        <dbReference type="ChEBI" id="CHEBI:57926"/>
        <dbReference type="ChEBI" id="CHEBI:78442"/>
        <dbReference type="ChEBI" id="CHEBI:78534"/>
        <dbReference type="ChEBI" id="CHEBI:456215"/>
        <dbReference type="EC" id="6.1.1.3"/>
    </reaction>
</comment>
<comment type="cofactor">
    <cofactor evidence="1">
        <name>Zn(2+)</name>
        <dbReference type="ChEBI" id="CHEBI:29105"/>
    </cofactor>
    <text evidence="1">Binds 1 zinc ion per subunit.</text>
</comment>
<comment type="subunit">
    <text evidence="1">Homodimer.</text>
</comment>
<comment type="subcellular location">
    <subcellularLocation>
        <location evidence="1">Cytoplasm</location>
    </subcellularLocation>
</comment>
<comment type="similarity">
    <text evidence="1">Belongs to the class-II aminoacyl-tRNA synthetase family.</text>
</comment>
<organism>
    <name type="scientific">Pseudomonas putida (strain GB-1)</name>
    <dbReference type="NCBI Taxonomy" id="76869"/>
    <lineage>
        <taxon>Bacteria</taxon>
        <taxon>Pseudomonadati</taxon>
        <taxon>Pseudomonadota</taxon>
        <taxon>Gammaproteobacteria</taxon>
        <taxon>Pseudomonadales</taxon>
        <taxon>Pseudomonadaceae</taxon>
        <taxon>Pseudomonas</taxon>
    </lineage>
</organism>
<protein>
    <recommendedName>
        <fullName evidence="1">Threonine--tRNA ligase</fullName>
        <ecNumber evidence="1">6.1.1.3</ecNumber>
    </recommendedName>
    <alternativeName>
        <fullName evidence="1">Threonyl-tRNA synthetase</fullName>
        <shortName evidence="1">ThrRS</shortName>
    </alternativeName>
</protein>